<proteinExistence type="inferred from homology"/>
<gene>
    <name evidence="1" type="primary">ybeD</name>
    <name type="ordered locus">STM0636</name>
</gene>
<comment type="similarity">
    <text evidence="1">Belongs to the UPF0250 family.</text>
</comment>
<feature type="chain" id="PRO_0000209311" description="UPF0250 protein YbeD">
    <location>
        <begin position="1"/>
        <end position="87"/>
    </location>
</feature>
<protein>
    <recommendedName>
        <fullName evidence="1">UPF0250 protein YbeD</fullName>
    </recommendedName>
</protein>
<evidence type="ECO:0000255" key="1">
    <source>
        <dbReference type="HAMAP-Rule" id="MF_00659"/>
    </source>
</evidence>
<sequence length="87" mass="9799">MKTKLNELLEFPTPFTYKVMGQALPELVDQVVEVVQRHAPGDYSPTVKPSSKGNYHSVSITINATHIEQVETLYEELGNIDIVRMVL</sequence>
<dbReference type="EMBL" id="AE006468">
    <property type="protein sequence ID" value="AAL19587.1"/>
    <property type="molecule type" value="Genomic_DNA"/>
</dbReference>
<dbReference type="RefSeq" id="NP_459628.1">
    <property type="nucleotide sequence ID" value="NC_003197.2"/>
</dbReference>
<dbReference type="RefSeq" id="WP_000850547.1">
    <property type="nucleotide sequence ID" value="NC_003197.2"/>
</dbReference>
<dbReference type="SMR" id="P67537"/>
<dbReference type="STRING" id="99287.STM0636"/>
<dbReference type="PaxDb" id="99287-STM0636"/>
<dbReference type="GeneID" id="1252156"/>
<dbReference type="GeneID" id="83645644"/>
<dbReference type="KEGG" id="stm:STM0636"/>
<dbReference type="PATRIC" id="fig|99287.12.peg.670"/>
<dbReference type="HOGENOM" id="CLU_161438_2_1_6"/>
<dbReference type="OMA" id="MNTKFDE"/>
<dbReference type="PhylomeDB" id="P67537"/>
<dbReference type="BioCyc" id="SENT99287:STM0636-MONOMER"/>
<dbReference type="Proteomes" id="UP000001014">
    <property type="component" value="Chromosome"/>
</dbReference>
<dbReference type="GO" id="GO:0005829">
    <property type="term" value="C:cytosol"/>
    <property type="evidence" value="ECO:0000318"/>
    <property type="project" value="GO_Central"/>
</dbReference>
<dbReference type="FunFam" id="3.30.70.260:FF:000002">
    <property type="entry name" value="UPF0250 protein YbeD"/>
    <property type="match status" value="1"/>
</dbReference>
<dbReference type="Gene3D" id="3.30.70.260">
    <property type="match status" value="1"/>
</dbReference>
<dbReference type="HAMAP" id="MF_00659">
    <property type="entry name" value="UPF0250"/>
    <property type="match status" value="1"/>
</dbReference>
<dbReference type="InterPro" id="IPR007454">
    <property type="entry name" value="UPF0250_YbeD-like"/>
</dbReference>
<dbReference type="InterPro" id="IPR027471">
    <property type="entry name" value="YbeD-like_sf"/>
</dbReference>
<dbReference type="NCBIfam" id="NF003447">
    <property type="entry name" value="PRK04998.1"/>
    <property type="match status" value="1"/>
</dbReference>
<dbReference type="PANTHER" id="PTHR38036">
    <property type="entry name" value="UPF0250 PROTEIN YBED"/>
    <property type="match status" value="1"/>
</dbReference>
<dbReference type="PANTHER" id="PTHR38036:SF1">
    <property type="entry name" value="UPF0250 PROTEIN YBED"/>
    <property type="match status" value="1"/>
</dbReference>
<dbReference type="Pfam" id="PF04359">
    <property type="entry name" value="DUF493"/>
    <property type="match status" value="1"/>
</dbReference>
<dbReference type="SUPFAM" id="SSF117991">
    <property type="entry name" value="YbeD/HP0495-like"/>
    <property type="match status" value="1"/>
</dbReference>
<keyword id="KW-1185">Reference proteome</keyword>
<reference key="1">
    <citation type="journal article" date="2001" name="Nature">
        <title>Complete genome sequence of Salmonella enterica serovar Typhimurium LT2.</title>
        <authorList>
            <person name="McClelland M."/>
            <person name="Sanderson K.E."/>
            <person name="Spieth J."/>
            <person name="Clifton S.W."/>
            <person name="Latreille P."/>
            <person name="Courtney L."/>
            <person name="Porwollik S."/>
            <person name="Ali J."/>
            <person name="Dante M."/>
            <person name="Du F."/>
            <person name="Hou S."/>
            <person name="Layman D."/>
            <person name="Leonard S."/>
            <person name="Nguyen C."/>
            <person name="Scott K."/>
            <person name="Holmes A."/>
            <person name="Grewal N."/>
            <person name="Mulvaney E."/>
            <person name="Ryan E."/>
            <person name="Sun H."/>
            <person name="Florea L."/>
            <person name="Miller W."/>
            <person name="Stoneking T."/>
            <person name="Nhan M."/>
            <person name="Waterston R."/>
            <person name="Wilson R.K."/>
        </authorList>
    </citation>
    <scope>NUCLEOTIDE SEQUENCE [LARGE SCALE GENOMIC DNA]</scope>
    <source>
        <strain>LT2 / SGSC1412 / ATCC 700720</strain>
    </source>
</reference>
<name>YBED_SALTY</name>
<organism>
    <name type="scientific">Salmonella typhimurium (strain LT2 / SGSC1412 / ATCC 700720)</name>
    <dbReference type="NCBI Taxonomy" id="99287"/>
    <lineage>
        <taxon>Bacteria</taxon>
        <taxon>Pseudomonadati</taxon>
        <taxon>Pseudomonadota</taxon>
        <taxon>Gammaproteobacteria</taxon>
        <taxon>Enterobacterales</taxon>
        <taxon>Enterobacteriaceae</taxon>
        <taxon>Salmonella</taxon>
    </lineage>
</organism>
<accession>P67537</accession>
<accession>Q8XGV6</accession>